<evidence type="ECO:0000255" key="1">
    <source>
        <dbReference type="HAMAP-Rule" id="MF_01337"/>
    </source>
</evidence>
<evidence type="ECO:0000256" key="2">
    <source>
        <dbReference type="SAM" id="MobiDB-lite"/>
    </source>
</evidence>
<evidence type="ECO:0000305" key="3"/>
<proteinExistence type="inferred from homology"/>
<organism>
    <name type="scientific">Streptococcus pneumoniae (strain Taiwan19F-14)</name>
    <dbReference type="NCBI Taxonomy" id="487213"/>
    <lineage>
        <taxon>Bacteria</taxon>
        <taxon>Bacillati</taxon>
        <taxon>Bacillota</taxon>
        <taxon>Bacilli</taxon>
        <taxon>Lactobacillales</taxon>
        <taxon>Streptococcaceae</taxon>
        <taxon>Streptococcus</taxon>
    </lineage>
</organism>
<protein>
    <recommendedName>
        <fullName evidence="1">Large ribosomal subunit protein uL18</fullName>
    </recommendedName>
    <alternativeName>
        <fullName evidence="3">50S ribosomal protein L18</fullName>
    </alternativeName>
</protein>
<gene>
    <name evidence="1" type="primary">rplR</name>
    <name type="ordered locus">SPT_0272</name>
</gene>
<accession>C1CPA4</accession>
<sequence>MISKPDKNKLRQKRHRRVRGKLSGTADRPRLNVFRSNTGIYAQVIDDVAGVTLASASTLDKEVSKGTKTEQAVAVGKLVAERANAKGISEVVFDRGGYLYHGRVKALADAARENGLKF</sequence>
<name>RL18_STRZT</name>
<comment type="function">
    <text evidence="1">This is one of the proteins that bind and probably mediate the attachment of the 5S RNA into the large ribosomal subunit, where it forms part of the central protuberance.</text>
</comment>
<comment type="subunit">
    <text evidence="1">Part of the 50S ribosomal subunit; part of the 5S rRNA/L5/L18/L25 subcomplex. Contacts the 5S and 23S rRNAs.</text>
</comment>
<comment type="similarity">
    <text evidence="1">Belongs to the universal ribosomal protein uL18 family.</text>
</comment>
<reference key="1">
    <citation type="journal article" date="2010" name="Genome Biol.">
        <title>Structure and dynamics of the pan-genome of Streptococcus pneumoniae and closely related species.</title>
        <authorList>
            <person name="Donati C."/>
            <person name="Hiller N.L."/>
            <person name="Tettelin H."/>
            <person name="Muzzi A."/>
            <person name="Croucher N.J."/>
            <person name="Angiuoli S.V."/>
            <person name="Oggioni M."/>
            <person name="Dunning Hotopp J.C."/>
            <person name="Hu F.Z."/>
            <person name="Riley D.R."/>
            <person name="Covacci A."/>
            <person name="Mitchell T.J."/>
            <person name="Bentley S.D."/>
            <person name="Kilian M."/>
            <person name="Ehrlich G.D."/>
            <person name="Rappuoli R."/>
            <person name="Moxon E.R."/>
            <person name="Masignani V."/>
        </authorList>
    </citation>
    <scope>NUCLEOTIDE SEQUENCE [LARGE SCALE GENOMIC DNA]</scope>
    <source>
        <strain>Taiwan19F-14</strain>
    </source>
</reference>
<keyword id="KW-0687">Ribonucleoprotein</keyword>
<keyword id="KW-0689">Ribosomal protein</keyword>
<keyword id="KW-0694">RNA-binding</keyword>
<keyword id="KW-0699">rRNA-binding</keyword>
<dbReference type="EMBL" id="CP000921">
    <property type="protein sequence ID" value="ACO23115.1"/>
    <property type="molecule type" value="Genomic_DNA"/>
</dbReference>
<dbReference type="RefSeq" id="WP_000624044.1">
    <property type="nucleotide sequence ID" value="NC_012469.1"/>
</dbReference>
<dbReference type="SMR" id="C1CPA4"/>
<dbReference type="GeneID" id="93738973"/>
<dbReference type="KEGG" id="snt:SPT_0272"/>
<dbReference type="HOGENOM" id="CLU_098841_0_1_9"/>
<dbReference type="GO" id="GO:0022625">
    <property type="term" value="C:cytosolic large ribosomal subunit"/>
    <property type="evidence" value="ECO:0007669"/>
    <property type="project" value="TreeGrafter"/>
</dbReference>
<dbReference type="GO" id="GO:0008097">
    <property type="term" value="F:5S rRNA binding"/>
    <property type="evidence" value="ECO:0007669"/>
    <property type="project" value="TreeGrafter"/>
</dbReference>
<dbReference type="GO" id="GO:0003735">
    <property type="term" value="F:structural constituent of ribosome"/>
    <property type="evidence" value="ECO:0007669"/>
    <property type="project" value="InterPro"/>
</dbReference>
<dbReference type="GO" id="GO:0006412">
    <property type="term" value="P:translation"/>
    <property type="evidence" value="ECO:0007669"/>
    <property type="project" value="UniProtKB-UniRule"/>
</dbReference>
<dbReference type="CDD" id="cd00432">
    <property type="entry name" value="Ribosomal_L18_L5e"/>
    <property type="match status" value="1"/>
</dbReference>
<dbReference type="FunFam" id="3.30.420.100:FF:000001">
    <property type="entry name" value="50S ribosomal protein L18"/>
    <property type="match status" value="1"/>
</dbReference>
<dbReference type="Gene3D" id="3.30.420.100">
    <property type="match status" value="1"/>
</dbReference>
<dbReference type="HAMAP" id="MF_01337_B">
    <property type="entry name" value="Ribosomal_uL18_B"/>
    <property type="match status" value="1"/>
</dbReference>
<dbReference type="InterPro" id="IPR004389">
    <property type="entry name" value="Ribosomal_uL18_bac-type"/>
</dbReference>
<dbReference type="InterPro" id="IPR005484">
    <property type="entry name" value="Ribosomal_uL18_bac/euk"/>
</dbReference>
<dbReference type="NCBIfam" id="TIGR00060">
    <property type="entry name" value="L18_bact"/>
    <property type="match status" value="1"/>
</dbReference>
<dbReference type="PANTHER" id="PTHR12899">
    <property type="entry name" value="39S RIBOSOMAL PROTEIN L18, MITOCHONDRIAL"/>
    <property type="match status" value="1"/>
</dbReference>
<dbReference type="PANTHER" id="PTHR12899:SF3">
    <property type="entry name" value="LARGE RIBOSOMAL SUBUNIT PROTEIN UL18M"/>
    <property type="match status" value="1"/>
</dbReference>
<dbReference type="Pfam" id="PF00861">
    <property type="entry name" value="Ribosomal_L18p"/>
    <property type="match status" value="1"/>
</dbReference>
<dbReference type="SUPFAM" id="SSF53137">
    <property type="entry name" value="Translational machinery components"/>
    <property type="match status" value="1"/>
</dbReference>
<feature type="chain" id="PRO_1000166254" description="Large ribosomal subunit protein uL18">
    <location>
        <begin position="1"/>
        <end position="118"/>
    </location>
</feature>
<feature type="region of interest" description="Disordered" evidence="2">
    <location>
        <begin position="1"/>
        <end position="25"/>
    </location>
</feature>
<feature type="compositionally biased region" description="Basic residues" evidence="2">
    <location>
        <begin position="10"/>
        <end position="20"/>
    </location>
</feature>